<keyword id="KW-0256">Endoplasmic reticulum</keyword>
<keyword id="KW-0325">Glycoprotein</keyword>
<keyword id="KW-0472">Membrane</keyword>
<keyword id="KW-1185">Reference proteome</keyword>
<keyword id="KW-0732">Signal</keyword>
<keyword id="KW-0812">Transmembrane</keyword>
<keyword id="KW-1133">Transmembrane helix</keyword>
<evidence type="ECO:0000250" key="1"/>
<evidence type="ECO:0000250" key="2">
    <source>
        <dbReference type="UniProtKB" id="Q02795"/>
    </source>
</evidence>
<evidence type="ECO:0000255" key="3"/>
<evidence type="ECO:0000305" key="4"/>
<feature type="signal peptide" evidence="3">
    <location>
        <begin position="1"/>
        <end position="18"/>
    </location>
</feature>
<feature type="chain" id="PRO_0000328636" description="Dolichyl-diphosphooligosaccharide--protein glycosyltransferase subunit swp1">
    <location>
        <begin position="19"/>
        <end position="685"/>
    </location>
</feature>
<feature type="topological domain" description="Lumenal" evidence="3">
    <location>
        <begin position="19"/>
        <end position="590"/>
    </location>
</feature>
<feature type="transmembrane region" description="Helical" evidence="3">
    <location>
        <begin position="591"/>
        <end position="611"/>
    </location>
</feature>
<feature type="topological domain" description="Cytoplasmic" evidence="3">
    <location>
        <begin position="612"/>
        <end position="620"/>
    </location>
</feature>
<feature type="transmembrane region" description="Helical" evidence="3">
    <location>
        <begin position="621"/>
        <end position="641"/>
    </location>
</feature>
<feature type="topological domain" description="Lumenal" evidence="3">
    <location>
        <begin position="642"/>
        <end position="646"/>
    </location>
</feature>
<feature type="transmembrane region" description="Helical" evidence="3">
    <location>
        <begin position="647"/>
        <end position="667"/>
    </location>
</feature>
<feature type="topological domain" description="Cytoplasmic" evidence="3">
    <location>
        <begin position="668"/>
        <end position="685"/>
    </location>
</feature>
<feature type="glycosylation site" description="N-linked (GlcNAc...) asparagine" evidence="3">
    <location>
        <position position="142"/>
    </location>
</feature>
<feature type="glycosylation site" description="N-linked (GlcNAc...) asparagine" evidence="3">
    <location>
        <position position="558"/>
    </location>
</feature>
<proteinExistence type="inferred from homology"/>
<organism>
    <name type="scientific">Dictyostelium discoideum</name>
    <name type="common">Social amoeba</name>
    <dbReference type="NCBI Taxonomy" id="44689"/>
    <lineage>
        <taxon>Eukaryota</taxon>
        <taxon>Amoebozoa</taxon>
        <taxon>Evosea</taxon>
        <taxon>Eumycetozoa</taxon>
        <taxon>Dictyostelia</taxon>
        <taxon>Dictyosteliales</taxon>
        <taxon>Dictyosteliaceae</taxon>
        <taxon>Dictyostelium</taxon>
    </lineage>
</organism>
<name>RPN2_DICDI</name>
<reference key="1">
    <citation type="journal article" date="2005" name="Nature">
        <title>The genome of the social amoeba Dictyostelium discoideum.</title>
        <authorList>
            <person name="Eichinger L."/>
            <person name="Pachebat J.A."/>
            <person name="Gloeckner G."/>
            <person name="Rajandream M.A."/>
            <person name="Sucgang R."/>
            <person name="Berriman M."/>
            <person name="Song J."/>
            <person name="Olsen R."/>
            <person name="Szafranski K."/>
            <person name="Xu Q."/>
            <person name="Tunggal B."/>
            <person name="Kummerfeld S."/>
            <person name="Madera M."/>
            <person name="Konfortov B.A."/>
            <person name="Rivero F."/>
            <person name="Bankier A.T."/>
            <person name="Lehmann R."/>
            <person name="Hamlin N."/>
            <person name="Davies R."/>
            <person name="Gaudet P."/>
            <person name="Fey P."/>
            <person name="Pilcher K."/>
            <person name="Chen G."/>
            <person name="Saunders D."/>
            <person name="Sodergren E.J."/>
            <person name="Davis P."/>
            <person name="Kerhornou A."/>
            <person name="Nie X."/>
            <person name="Hall N."/>
            <person name="Anjard C."/>
            <person name="Hemphill L."/>
            <person name="Bason N."/>
            <person name="Farbrother P."/>
            <person name="Desany B."/>
            <person name="Just E."/>
            <person name="Morio T."/>
            <person name="Rost R."/>
            <person name="Churcher C.M."/>
            <person name="Cooper J."/>
            <person name="Haydock S."/>
            <person name="van Driessche N."/>
            <person name="Cronin A."/>
            <person name="Goodhead I."/>
            <person name="Muzny D.M."/>
            <person name="Mourier T."/>
            <person name="Pain A."/>
            <person name="Lu M."/>
            <person name="Harper D."/>
            <person name="Lindsay R."/>
            <person name="Hauser H."/>
            <person name="James K.D."/>
            <person name="Quiles M."/>
            <person name="Madan Babu M."/>
            <person name="Saito T."/>
            <person name="Buchrieser C."/>
            <person name="Wardroper A."/>
            <person name="Felder M."/>
            <person name="Thangavelu M."/>
            <person name="Johnson D."/>
            <person name="Knights A."/>
            <person name="Loulseged H."/>
            <person name="Mungall K.L."/>
            <person name="Oliver K."/>
            <person name="Price C."/>
            <person name="Quail M.A."/>
            <person name="Urushihara H."/>
            <person name="Hernandez J."/>
            <person name="Rabbinowitsch E."/>
            <person name="Steffen D."/>
            <person name="Sanders M."/>
            <person name="Ma J."/>
            <person name="Kohara Y."/>
            <person name="Sharp S."/>
            <person name="Simmonds M.N."/>
            <person name="Spiegler S."/>
            <person name="Tivey A."/>
            <person name="Sugano S."/>
            <person name="White B."/>
            <person name="Walker D."/>
            <person name="Woodward J.R."/>
            <person name="Winckler T."/>
            <person name="Tanaka Y."/>
            <person name="Shaulsky G."/>
            <person name="Schleicher M."/>
            <person name="Weinstock G.M."/>
            <person name="Rosenthal A."/>
            <person name="Cox E.C."/>
            <person name="Chisholm R.L."/>
            <person name="Gibbs R.A."/>
            <person name="Loomis W.F."/>
            <person name="Platzer M."/>
            <person name="Kay R.R."/>
            <person name="Williams J.G."/>
            <person name="Dear P.H."/>
            <person name="Noegel A.A."/>
            <person name="Barrell B.G."/>
            <person name="Kuspa A."/>
        </authorList>
    </citation>
    <scope>NUCLEOTIDE SEQUENCE [LARGE SCALE GENOMIC DNA]</scope>
    <source>
        <strain>AX4</strain>
    </source>
</reference>
<sequence>MKLIILIVLSILISIVISGSVQSKITTTRGISNVYSKNDINNIKQFISSKYNGNTKLYGESLKDTFYGVGVLTRIGETNIEATKDICKQTKEQLKQNKFTDIELVFNGVTILSELKCLQGESSSSLGNEQQLQDLLKNKLENGSLLEKTQAINIYFTLSSAKAIDSKTVSIIDPLLIQAVNSMVSLMDEDGTFKSVSTDDEGNLQNTAAAYFALARLSHRLKSNEVDKLVAKVVNKVDTVLASADETTDSLYFNDLSTTSSLLHGLLSLASVNDKVADVISNKQINQISEYLLRQKNVESLSDAYHLIVALKRCQKNSISQPISLALVKSIYSPSGLNDIRVRVTDIFDQPIEASIVINKVVSSKNPRSTPILSGKEMKFQSSDNSFVADLSNENLKLGSYNFEFKVQPVDTDSYKSITNIQIITITGAVTVNDMKLSYAPKSDQLGSPKTTNEVQFGQKLPLIEIPSNNIARIFFRIASEAQPYQAQQVGIRFYSPAREAVVPATYSADAYSYTFTNKDACKILGCQSGNYQLDLIIGDQSITPLQWNFGEINLKFNQSTIPTNRYPEQLPISHNFRVAEKRPPQSISSLFTLLVLSPIAIFVIGLLFVGTNLGRFPTGMGFIYTIGFLGCISATGLLIVNYWLHSTMDVTLKNLALLMIPLVFFGHKSMSYYSNLSSSNIKKD</sequence>
<protein>
    <recommendedName>
        <fullName>Dolichyl-diphosphooligosaccharide--protein glycosyltransferase subunit swp1</fullName>
        <shortName>Oligosaccharyl transferase subunit swp1</shortName>
    </recommendedName>
    <alternativeName>
        <fullName>Ribophorin II</fullName>
        <shortName>RPN-II</shortName>
    </alternativeName>
    <alternativeName>
        <fullName>Ribophorin-2</fullName>
    </alternativeName>
</protein>
<gene>
    <name type="primary">swp1</name>
    <name type="synonym">rpn2</name>
    <name type="ORF">DDB_G0289479</name>
</gene>
<accession>Q54HG9</accession>
<comment type="function">
    <text evidence="2">Subunit of the oligosaccharyl transferase (OST) complex that catalyzes the initial transfer of a defined glycan (Glc(3)Man(9)GlcNAc(2) in eukaryotes) from the lipid carrier dolichol-pyrophosphate to an asparagine residue within an Asn-X-Ser/Thr consensus motif in nascent polypeptide chains, the first step in protein N-glycosylation. N-glycosylation occurs cotranslationally and the complex associates with the Sec61 complex at the channel-forming translocon complex that mediates protein translocation across the endoplasmic reticulum (ER). All subunits are required for a maximal enzyme activity.</text>
</comment>
<comment type="pathway">
    <text>Protein modification; protein glycosylation.</text>
</comment>
<comment type="subunit">
    <text evidence="2">Component of the oligosaccharyltransferase (OST) complex.</text>
</comment>
<comment type="subcellular location">
    <subcellularLocation>
        <location evidence="1">Endoplasmic reticulum membrane</location>
        <topology evidence="1">Multi-pass membrane protein</topology>
    </subcellularLocation>
</comment>
<comment type="similarity">
    <text evidence="4">Belongs to the SWP1 family.</text>
</comment>
<dbReference type="EMBL" id="AAFI02000141">
    <property type="protein sequence ID" value="EAL62719.1"/>
    <property type="molecule type" value="Genomic_DNA"/>
</dbReference>
<dbReference type="RefSeq" id="XP_636216.1">
    <property type="nucleotide sequence ID" value="XM_631124.1"/>
</dbReference>
<dbReference type="SMR" id="Q54HG9"/>
<dbReference type="FunCoup" id="Q54HG9">
    <property type="interactions" value="552"/>
</dbReference>
<dbReference type="STRING" id="44689.Q54HG9"/>
<dbReference type="GlyCosmos" id="Q54HG9">
    <property type="glycosylation" value="2 sites, No reported glycans"/>
</dbReference>
<dbReference type="GlyGen" id="Q54HG9">
    <property type="glycosylation" value="2 sites"/>
</dbReference>
<dbReference type="PaxDb" id="44689-DDB0233147"/>
<dbReference type="EnsemblProtists" id="EAL62719">
    <property type="protein sequence ID" value="EAL62719"/>
    <property type="gene ID" value="DDB_G0289479"/>
</dbReference>
<dbReference type="GeneID" id="8627154"/>
<dbReference type="KEGG" id="ddi:DDB_G0289479"/>
<dbReference type="dictyBase" id="DDB_G0289479">
    <property type="gene designation" value="swp1"/>
</dbReference>
<dbReference type="VEuPathDB" id="AmoebaDB:DDB_G0289479"/>
<dbReference type="eggNOG" id="KOG2447">
    <property type="taxonomic scope" value="Eukaryota"/>
</dbReference>
<dbReference type="HOGENOM" id="CLU_401957_0_0_1"/>
<dbReference type="InParanoid" id="Q54HG9"/>
<dbReference type="OMA" id="QEHETIY"/>
<dbReference type="PhylomeDB" id="Q54HG9"/>
<dbReference type="UniPathway" id="UPA00378"/>
<dbReference type="PRO" id="PR:Q54HG9"/>
<dbReference type="Proteomes" id="UP000002195">
    <property type="component" value="Chromosome 5"/>
</dbReference>
<dbReference type="GO" id="GO:0008250">
    <property type="term" value="C:oligosaccharyltransferase complex"/>
    <property type="evidence" value="ECO:0000250"/>
    <property type="project" value="dictyBase"/>
</dbReference>
<dbReference type="GO" id="GO:0006487">
    <property type="term" value="P:protein N-linked glycosylation"/>
    <property type="evidence" value="ECO:0000318"/>
    <property type="project" value="GO_Central"/>
</dbReference>
<dbReference type="InterPro" id="IPR055375">
    <property type="entry name" value="Ribophorin_II_2nd"/>
</dbReference>
<dbReference type="InterPro" id="IPR055374">
    <property type="entry name" value="Ribophorin_II_3rd"/>
</dbReference>
<dbReference type="InterPro" id="IPR056790">
    <property type="entry name" value="Ribophorin_II_C"/>
</dbReference>
<dbReference type="InterPro" id="IPR055373">
    <property type="entry name" value="Ribophorin_II_N"/>
</dbReference>
<dbReference type="InterPro" id="IPR008814">
    <property type="entry name" value="Swp1"/>
</dbReference>
<dbReference type="PANTHER" id="PTHR12640:SF0">
    <property type="entry name" value="DOLICHYL-DIPHOSPHOOLIGOSACCHARIDE--PROTEIN GLYCOSYLTRANSFERASE SUBUNIT 2"/>
    <property type="match status" value="1"/>
</dbReference>
<dbReference type="PANTHER" id="PTHR12640">
    <property type="entry name" value="RIBOPHORIN II"/>
    <property type="match status" value="1"/>
</dbReference>
<dbReference type="Pfam" id="PF05817">
    <property type="entry name" value="Ribophorin_II"/>
    <property type="match status" value="1"/>
</dbReference>
<dbReference type="Pfam" id="PF23861">
    <property type="entry name" value="Ribophorin_II_2nd"/>
    <property type="match status" value="1"/>
</dbReference>
<dbReference type="Pfam" id="PF23860">
    <property type="entry name" value="Ribophorin_II_3rd"/>
    <property type="match status" value="1"/>
</dbReference>
<dbReference type="Pfam" id="PF25147">
    <property type="entry name" value="Ribophorin_II_C"/>
    <property type="match status" value="1"/>
</dbReference>